<name>LIRP_LOCMI</name>
<accession>P15131</accession>
<protein>
    <recommendedName>
        <fullName>LIRP</fullName>
    </recommendedName>
    <alternativeName>
        <fullName>Locusta insulin-related peptide</fullName>
    </alternativeName>
    <component>
        <recommendedName>
            <fullName>LIRP B chain</fullName>
        </recommendedName>
    </component>
    <component>
        <recommendedName>
            <fullName>5 kDa peptide</fullName>
        </recommendedName>
        <alternativeName>
            <fullName>C chain</fullName>
        </alternativeName>
    </component>
    <component>
        <recommendedName>
            <fullName>LIRP A chain</fullName>
        </recommendedName>
    </component>
</protein>
<evidence type="ECO:0000250" key="1"/>
<evidence type="ECO:0000255" key="2"/>
<evidence type="ECO:0000269" key="3">
    <source>
    </source>
</evidence>
<evidence type="ECO:0000305" key="4"/>
<sequence length="145" mass="15774">MWKLCLRLLAVLAVCLSTATQAQSDLFLLSPKRSGAPQPVARYCGEKLSNALKLVCRGNYNTMFKKASQDVSDSESEDNYWSGQSADEAAEAAAAALPPYPILARPSAGGLLTGAVFRRRTRGVFDECCRKSCSISELQTYCGRR</sequence>
<comment type="subunit">
    <text>Heterodimer of a B chain and an A chain linked by two disulfide bonds.</text>
</comment>
<comment type="subcellular location">
    <subcellularLocation>
        <location>Secreted</location>
    </subcellularLocation>
</comment>
<comment type="similarity">
    <text evidence="4">Belongs to the insulin family.</text>
</comment>
<proteinExistence type="evidence at protein level"/>
<reference key="1">
    <citation type="journal article" date="1990" name="Eur. J. Biochem.">
        <title>cDNAs from neurosecretory cells of brains of Locusta migratoria (Insecta, Orthoptera) encoding a novel member of the superfamily of insulins.</title>
        <authorList>
            <person name="Lagueux M."/>
            <person name="Lwoff L."/>
            <person name="Meister M."/>
            <person name="Goltzene F."/>
            <person name="Hoffmann J.A."/>
        </authorList>
    </citation>
    <scope>NUCLEOTIDE SEQUENCE [MRNA]</scope>
    <source>
        <tissue>Brain</tissue>
    </source>
</reference>
<reference key="2">
    <citation type="journal article" date="1994" name="Eur. J. Biochem.">
        <title>Expression of the gene encoding an insulin-related peptide in Locusta (Insecta, Orthoptera). Evidence for alternative promoter usage.</title>
        <authorList>
            <person name="Kromer-Metzger E."/>
            <person name="Lagueux M."/>
        </authorList>
    </citation>
    <scope>NUCLEOTIDE SEQUENCE [GENOMIC DNA]</scope>
</reference>
<reference key="3">
    <citation type="journal article" date="1990" name="Eur. J. Biochem.">
        <title>Isolation and structure elucidation of a novel 5-kDa peptide from neurohaemal lobes of the corpora cardiaca of Locusta migratoria (Insecta, Orthoptera).</title>
        <authorList>
            <person name="Hietter H."/>
            <person name="van Dorsselaer A."/>
            <person name="Green B."/>
            <person name="Denoroy L."/>
            <person name="Hoffmann J.A."/>
            <person name="Luu B."/>
        </authorList>
    </citation>
    <scope>PROTEIN SEQUENCE OF 67-116</scope>
    <source>
        <tissue>Corpora cardiaca</tissue>
    </source>
</reference>
<reference key="4">
    <citation type="journal article" date="1991" name="Eur. J. Biochem.">
        <title>Isolation and structural characterization of an insulin-related molecule, a predominant neuropeptide from Locusta migratoria.</title>
        <authorList>
            <person name="Hetru C."/>
            <person name="Li K.-W."/>
            <person name="Bulet P."/>
            <person name="Lagueux M."/>
            <person name="Hoffmann J.A."/>
        </authorList>
    </citation>
    <scope>PROTEIN SEQUENCE OF 34-64 AND 123-143</scope>
    <source>
        <tissue>Corpora cardiaca</tissue>
    </source>
</reference>
<keyword id="KW-0165">Cleavage on pair of basic residues</keyword>
<keyword id="KW-0903">Direct protein sequencing</keyword>
<keyword id="KW-1015">Disulfide bond</keyword>
<keyword id="KW-0372">Hormone</keyword>
<keyword id="KW-0964">Secreted</keyword>
<keyword id="KW-0732">Signal</keyword>
<organism>
    <name type="scientific">Locusta migratoria</name>
    <name type="common">Migratory locust</name>
    <dbReference type="NCBI Taxonomy" id="7004"/>
    <lineage>
        <taxon>Eukaryota</taxon>
        <taxon>Metazoa</taxon>
        <taxon>Ecdysozoa</taxon>
        <taxon>Arthropoda</taxon>
        <taxon>Hexapoda</taxon>
        <taxon>Insecta</taxon>
        <taxon>Pterygota</taxon>
        <taxon>Neoptera</taxon>
        <taxon>Polyneoptera</taxon>
        <taxon>Orthoptera</taxon>
        <taxon>Caelifera</taxon>
        <taxon>Acrididea</taxon>
        <taxon>Acridomorpha</taxon>
        <taxon>Acridoidea</taxon>
        <taxon>Acrididae</taxon>
        <taxon>Oedipodinae</taxon>
        <taxon>Locusta</taxon>
    </lineage>
</organism>
<feature type="signal peptide" description="Or 22" evidence="2">
    <location>
        <begin position="1"/>
        <end position="19"/>
    </location>
</feature>
<feature type="propeptide" id="PRO_0000016058" evidence="3">
    <location>
        <begin position="20"/>
        <end position="33"/>
    </location>
</feature>
<feature type="peptide" id="PRO_0000016059" description="LIRP B chain">
    <location>
        <begin position="34"/>
        <end position="64"/>
    </location>
</feature>
<feature type="peptide" id="PRO_0000016060" description="5 kDa peptide">
    <location>
        <begin position="67"/>
        <end position="116"/>
    </location>
</feature>
<feature type="propeptide" id="PRO_0000016061" evidence="3">
    <location>
        <begin position="117"/>
        <end position="122"/>
    </location>
</feature>
<feature type="peptide" id="PRO_0000016062" description="LIRP A chain">
    <location>
        <begin position="123"/>
        <end position="143"/>
    </location>
</feature>
<feature type="disulfide bond" description="Interchain (between B and A chains)" evidence="1">
    <location>
        <begin position="44"/>
        <end position="129"/>
    </location>
</feature>
<feature type="disulfide bond" description="Interchain (between B and A chains)" evidence="1">
    <location>
        <begin position="56"/>
        <end position="142"/>
    </location>
</feature>
<feature type="disulfide bond" evidence="1">
    <location>
        <begin position="128"/>
        <end position="133"/>
    </location>
</feature>
<feature type="sequence conflict" description="In Ref. 1; CAA34889." evidence="4" ref="1">
    <original>S</original>
    <variation>T</variation>
    <location>
        <position position="132"/>
    </location>
</feature>
<dbReference type="EMBL" id="X17024">
    <property type="protein sequence ID" value="CAA34889.1"/>
    <property type="molecule type" value="mRNA"/>
</dbReference>
<dbReference type="EMBL" id="Z29963">
    <property type="protein sequence ID" value="CAA82851.1"/>
    <property type="molecule type" value="Genomic_DNA"/>
</dbReference>
<dbReference type="EMBL" id="Z29964">
    <property type="protein sequence ID" value="CAA82852.1"/>
    <property type="molecule type" value="Genomic_DNA"/>
</dbReference>
<dbReference type="PIR" id="S43224">
    <property type="entry name" value="S43224"/>
</dbReference>
<dbReference type="GO" id="GO:0005576">
    <property type="term" value="C:extracellular region"/>
    <property type="evidence" value="ECO:0007669"/>
    <property type="project" value="UniProtKB-SubCell"/>
</dbReference>
<dbReference type="GO" id="GO:0005179">
    <property type="term" value="F:hormone activity"/>
    <property type="evidence" value="ECO:0007669"/>
    <property type="project" value="UniProtKB-KW"/>
</dbReference>
<dbReference type="CDD" id="cd04366">
    <property type="entry name" value="IlGF_insulin_bombyxin_like"/>
    <property type="match status" value="1"/>
</dbReference>
<dbReference type="Gene3D" id="1.10.100.10">
    <property type="entry name" value="Insulin-like"/>
    <property type="match status" value="1"/>
</dbReference>
<dbReference type="InterPro" id="IPR016179">
    <property type="entry name" value="Insulin-like"/>
</dbReference>
<dbReference type="InterPro" id="IPR036438">
    <property type="entry name" value="Insulin-like_sf"/>
</dbReference>
<dbReference type="InterPro" id="IPR022353">
    <property type="entry name" value="Insulin_CS"/>
</dbReference>
<dbReference type="InterPro" id="IPR022352">
    <property type="entry name" value="Insulin_family"/>
</dbReference>
<dbReference type="PANTHER" id="PTHR13647:SF4">
    <property type="entry name" value="INSULIN-LIKE PEPTIDE 1-RELATED"/>
    <property type="match status" value="1"/>
</dbReference>
<dbReference type="PANTHER" id="PTHR13647">
    <property type="entry name" value="INSULIN-LIKE PEPTIDE 2-RELATED"/>
    <property type="match status" value="1"/>
</dbReference>
<dbReference type="Pfam" id="PF00049">
    <property type="entry name" value="Insulin"/>
    <property type="match status" value="1"/>
</dbReference>
<dbReference type="PRINTS" id="PR00276">
    <property type="entry name" value="INSULINFAMLY"/>
</dbReference>
<dbReference type="SMART" id="SM00078">
    <property type="entry name" value="IlGF"/>
    <property type="match status" value="1"/>
</dbReference>
<dbReference type="SUPFAM" id="SSF56994">
    <property type="entry name" value="Insulin-like"/>
    <property type="match status" value="1"/>
</dbReference>
<dbReference type="PROSITE" id="PS00262">
    <property type="entry name" value="INSULIN"/>
    <property type="match status" value="1"/>
</dbReference>